<reference key="1">
    <citation type="submission" date="2006-01" db="EMBL/GenBank/DDBJ databases">
        <title>A comparison of the first two published chloroplast genomes in Asteraceae: Lactuca and Helianthus.</title>
        <authorList>
            <person name="Timme R.E."/>
            <person name="Kuehl J.V."/>
            <person name="Boore J.L."/>
            <person name="Jansen R.K."/>
        </authorList>
    </citation>
    <scope>NUCLEOTIDE SEQUENCE [LARGE SCALE GENOMIC DNA]</scope>
    <source>
        <strain>cv. HA383</strain>
    </source>
</reference>
<evidence type="ECO:0000250" key="1"/>
<evidence type="ECO:0000255" key="2">
    <source>
        <dbReference type="HAMAP-Rule" id="MF_01344"/>
    </source>
</evidence>
<keyword id="KW-0150">Chloroplast</keyword>
<keyword id="KW-0249">Electron transport</keyword>
<keyword id="KW-0472">Membrane</keyword>
<keyword id="KW-0602">Photosynthesis</keyword>
<keyword id="KW-0934">Plastid</keyword>
<keyword id="KW-0793">Thylakoid</keyword>
<keyword id="KW-0812">Transmembrane</keyword>
<keyword id="KW-1133">Transmembrane helix</keyword>
<keyword id="KW-0813">Transport</keyword>
<feature type="chain" id="PRO_0000255567" description="Cytochrome b6-f complex subunit 4">
    <location>
        <begin position="1"/>
        <end position="160"/>
    </location>
</feature>
<feature type="transmembrane region" description="Helical" evidence="2">
    <location>
        <begin position="36"/>
        <end position="56"/>
    </location>
</feature>
<feature type="transmembrane region" description="Helical" evidence="2">
    <location>
        <begin position="95"/>
        <end position="115"/>
    </location>
</feature>
<feature type="transmembrane region" description="Helical" evidence="2">
    <location>
        <begin position="131"/>
        <end position="151"/>
    </location>
</feature>
<sequence>MGVTKKPDLNDPVLRAKLAKGMGHNYYGEPAWPNDLLYIFPVVILGTIACNVGLAVLEPSMIGEPADPFATPLEILPEWYFFPVFQILRTVPNKLLGVLLMVSVPAGLLTVPFLENVNKFQNPFRRPVATTVFLIGTAVALWLGIGATLPIDKSLTLGLF</sequence>
<gene>
    <name evidence="2" type="primary">petD</name>
</gene>
<proteinExistence type="inferred from homology"/>
<geneLocation type="chloroplast"/>
<protein>
    <recommendedName>
        <fullName evidence="2">Cytochrome b6-f complex subunit 4</fullName>
    </recommendedName>
    <alternativeName>
        <fullName evidence="2">17 kDa polypeptide</fullName>
    </alternativeName>
</protein>
<name>PETD_HELAN</name>
<accession>Q1KXS8</accession>
<dbReference type="EMBL" id="DQ383815">
    <property type="protein sequence ID" value="ABD47176.1"/>
    <property type="molecule type" value="Genomic_DNA"/>
</dbReference>
<dbReference type="RefSeq" id="YP_588148.1">
    <property type="nucleotide sequence ID" value="NC_007977.1"/>
</dbReference>
<dbReference type="SMR" id="Q1KXS8"/>
<dbReference type="GeneID" id="4055690"/>
<dbReference type="KEGG" id="han:4055690"/>
<dbReference type="OrthoDB" id="244at2759"/>
<dbReference type="GO" id="GO:0009535">
    <property type="term" value="C:chloroplast thylakoid membrane"/>
    <property type="evidence" value="ECO:0007669"/>
    <property type="project" value="UniProtKB-SubCell"/>
</dbReference>
<dbReference type="GO" id="GO:0045158">
    <property type="term" value="F:electron transporter, transferring electrons within cytochrome b6/f complex of photosystem II activity"/>
    <property type="evidence" value="ECO:0007669"/>
    <property type="project" value="UniProtKB-UniRule"/>
</dbReference>
<dbReference type="GO" id="GO:0045156">
    <property type="term" value="F:electron transporter, transferring electrons within the cyclic electron transport pathway of photosynthesis activity"/>
    <property type="evidence" value="ECO:0007669"/>
    <property type="project" value="InterPro"/>
</dbReference>
<dbReference type="GO" id="GO:0016491">
    <property type="term" value="F:oxidoreductase activity"/>
    <property type="evidence" value="ECO:0007669"/>
    <property type="project" value="InterPro"/>
</dbReference>
<dbReference type="GO" id="GO:0009767">
    <property type="term" value="P:photosynthetic electron transport chain"/>
    <property type="evidence" value="ECO:0007669"/>
    <property type="project" value="InterPro"/>
</dbReference>
<dbReference type="CDD" id="cd00290">
    <property type="entry name" value="cytochrome_b_C"/>
    <property type="match status" value="1"/>
</dbReference>
<dbReference type="FunFam" id="1.10.287.980:FF:000001">
    <property type="entry name" value="Cytochrome b6-f complex subunit 4"/>
    <property type="match status" value="1"/>
</dbReference>
<dbReference type="FunFam" id="1.20.5.510:FF:000002">
    <property type="entry name" value="Cytochrome b6-f complex subunit 4"/>
    <property type="match status" value="1"/>
</dbReference>
<dbReference type="Gene3D" id="1.10.287.980">
    <property type="entry name" value="plastocyanin oxidoreductase"/>
    <property type="match status" value="1"/>
</dbReference>
<dbReference type="Gene3D" id="1.20.5.510">
    <property type="entry name" value="Single helix bin"/>
    <property type="match status" value="1"/>
</dbReference>
<dbReference type="HAMAP" id="MF_01344">
    <property type="entry name" value="Cytb6_f_subIV"/>
    <property type="match status" value="1"/>
</dbReference>
<dbReference type="InterPro" id="IPR005798">
    <property type="entry name" value="Cyt_b/b6_C"/>
</dbReference>
<dbReference type="InterPro" id="IPR036150">
    <property type="entry name" value="Cyt_b/b6_C_sf"/>
</dbReference>
<dbReference type="InterPro" id="IPR005870">
    <property type="entry name" value="Cyt_b6/f_cplx_suIV"/>
</dbReference>
<dbReference type="InterPro" id="IPR048260">
    <property type="entry name" value="Cytochrome_b_C_euk/bac"/>
</dbReference>
<dbReference type="NCBIfam" id="TIGR01156">
    <property type="entry name" value="cytb6_f_IV"/>
    <property type="match status" value="1"/>
</dbReference>
<dbReference type="PANTHER" id="PTHR19271">
    <property type="entry name" value="CYTOCHROME B"/>
    <property type="match status" value="1"/>
</dbReference>
<dbReference type="PANTHER" id="PTHR19271:SF16">
    <property type="entry name" value="CYTOCHROME B"/>
    <property type="match status" value="1"/>
</dbReference>
<dbReference type="Pfam" id="PF00032">
    <property type="entry name" value="Cytochrom_B_C"/>
    <property type="match status" value="1"/>
</dbReference>
<dbReference type="PIRSF" id="PIRSF000033">
    <property type="entry name" value="B6f_17K"/>
    <property type="match status" value="1"/>
</dbReference>
<dbReference type="SUPFAM" id="SSF81648">
    <property type="entry name" value="a domain/subunit of cytochrome bc1 complex (Ubiquinol-cytochrome c reductase)"/>
    <property type="match status" value="1"/>
</dbReference>
<dbReference type="PROSITE" id="PS51003">
    <property type="entry name" value="CYTB_CTER"/>
    <property type="match status" value="1"/>
</dbReference>
<organism>
    <name type="scientific">Helianthus annuus</name>
    <name type="common">Common sunflower</name>
    <dbReference type="NCBI Taxonomy" id="4232"/>
    <lineage>
        <taxon>Eukaryota</taxon>
        <taxon>Viridiplantae</taxon>
        <taxon>Streptophyta</taxon>
        <taxon>Embryophyta</taxon>
        <taxon>Tracheophyta</taxon>
        <taxon>Spermatophyta</taxon>
        <taxon>Magnoliopsida</taxon>
        <taxon>eudicotyledons</taxon>
        <taxon>Gunneridae</taxon>
        <taxon>Pentapetalae</taxon>
        <taxon>asterids</taxon>
        <taxon>campanulids</taxon>
        <taxon>Asterales</taxon>
        <taxon>Asteraceae</taxon>
        <taxon>Asteroideae</taxon>
        <taxon>Heliantheae alliance</taxon>
        <taxon>Heliantheae</taxon>
        <taxon>Helianthus</taxon>
    </lineage>
</organism>
<comment type="function">
    <text evidence="2">Component of the cytochrome b6-f complex, which mediates electron transfer between photosystem II (PSII) and photosystem I (PSI), cyclic electron flow around PSI, and state transitions.</text>
</comment>
<comment type="subunit">
    <text evidence="1">The 4 large subunits of the cytochrome b6-f complex are cytochrome b6, subunit IV (17 kDa polypeptide, petD), cytochrome f and the Rieske protein, while the 4 small subunits are petG, petL, petM and petN. The complex functions as a dimer (By similarity).</text>
</comment>
<comment type="subcellular location">
    <subcellularLocation>
        <location evidence="2">Plastid</location>
        <location evidence="2">Chloroplast thylakoid membrane</location>
        <topology evidence="2">Multi-pass membrane protein</topology>
    </subcellularLocation>
</comment>
<comment type="similarity">
    <text evidence="2">Belongs to the cytochrome b family. PetD subfamily.</text>
</comment>